<keyword id="KW-0217">Developmental protein</keyword>
<keyword id="KW-0238">DNA-binding</keyword>
<keyword id="KW-0371">Homeobox</keyword>
<keyword id="KW-0539">Nucleus</keyword>
<keyword id="KW-1185">Reference proteome</keyword>
<keyword id="KW-0804">Transcription</keyword>
<keyword id="KW-0805">Transcription regulation</keyword>
<accession>P31311</accession>
<accession>Q3V026</accession>
<reference key="1">
    <citation type="journal article" date="1995" name="Development">
        <title>Hoxa 11 structure, extensive antisense transcription, and function in male and female fertility.</title>
        <authorList>
            <person name="Hsieh-Li H.M."/>
            <person name="Witte D.P."/>
            <person name="Weinstein M."/>
            <person name="Branford W."/>
            <person name="Li H."/>
            <person name="Small K."/>
            <person name="Potter S.S."/>
        </authorList>
    </citation>
    <scope>NUCLEOTIDE SEQUENCE [GENOMIC DNA / MRNA]</scope>
</reference>
<reference key="2">
    <citation type="journal article" date="2005" name="Science">
        <title>The transcriptional landscape of the mammalian genome.</title>
        <authorList>
            <person name="Carninci P."/>
            <person name="Kasukawa T."/>
            <person name="Katayama S."/>
            <person name="Gough J."/>
            <person name="Frith M.C."/>
            <person name="Maeda N."/>
            <person name="Oyama R."/>
            <person name="Ravasi T."/>
            <person name="Lenhard B."/>
            <person name="Wells C."/>
            <person name="Kodzius R."/>
            <person name="Shimokawa K."/>
            <person name="Bajic V.B."/>
            <person name="Brenner S.E."/>
            <person name="Batalov S."/>
            <person name="Forrest A.R."/>
            <person name="Zavolan M."/>
            <person name="Davis M.J."/>
            <person name="Wilming L.G."/>
            <person name="Aidinis V."/>
            <person name="Allen J.E."/>
            <person name="Ambesi-Impiombato A."/>
            <person name="Apweiler R."/>
            <person name="Aturaliya R.N."/>
            <person name="Bailey T.L."/>
            <person name="Bansal M."/>
            <person name="Baxter L."/>
            <person name="Beisel K.W."/>
            <person name="Bersano T."/>
            <person name="Bono H."/>
            <person name="Chalk A.M."/>
            <person name="Chiu K.P."/>
            <person name="Choudhary V."/>
            <person name="Christoffels A."/>
            <person name="Clutterbuck D.R."/>
            <person name="Crowe M.L."/>
            <person name="Dalla E."/>
            <person name="Dalrymple B.P."/>
            <person name="de Bono B."/>
            <person name="Della Gatta G."/>
            <person name="di Bernardo D."/>
            <person name="Down T."/>
            <person name="Engstrom P."/>
            <person name="Fagiolini M."/>
            <person name="Faulkner G."/>
            <person name="Fletcher C.F."/>
            <person name="Fukushima T."/>
            <person name="Furuno M."/>
            <person name="Futaki S."/>
            <person name="Gariboldi M."/>
            <person name="Georgii-Hemming P."/>
            <person name="Gingeras T.R."/>
            <person name="Gojobori T."/>
            <person name="Green R.E."/>
            <person name="Gustincich S."/>
            <person name="Harbers M."/>
            <person name="Hayashi Y."/>
            <person name="Hensch T.K."/>
            <person name="Hirokawa N."/>
            <person name="Hill D."/>
            <person name="Huminiecki L."/>
            <person name="Iacono M."/>
            <person name="Ikeo K."/>
            <person name="Iwama A."/>
            <person name="Ishikawa T."/>
            <person name="Jakt M."/>
            <person name="Kanapin A."/>
            <person name="Katoh M."/>
            <person name="Kawasawa Y."/>
            <person name="Kelso J."/>
            <person name="Kitamura H."/>
            <person name="Kitano H."/>
            <person name="Kollias G."/>
            <person name="Krishnan S.P."/>
            <person name="Kruger A."/>
            <person name="Kummerfeld S.K."/>
            <person name="Kurochkin I.V."/>
            <person name="Lareau L.F."/>
            <person name="Lazarevic D."/>
            <person name="Lipovich L."/>
            <person name="Liu J."/>
            <person name="Liuni S."/>
            <person name="McWilliam S."/>
            <person name="Madan Babu M."/>
            <person name="Madera M."/>
            <person name="Marchionni L."/>
            <person name="Matsuda H."/>
            <person name="Matsuzawa S."/>
            <person name="Miki H."/>
            <person name="Mignone F."/>
            <person name="Miyake S."/>
            <person name="Morris K."/>
            <person name="Mottagui-Tabar S."/>
            <person name="Mulder N."/>
            <person name="Nakano N."/>
            <person name="Nakauchi H."/>
            <person name="Ng P."/>
            <person name="Nilsson R."/>
            <person name="Nishiguchi S."/>
            <person name="Nishikawa S."/>
            <person name="Nori F."/>
            <person name="Ohara O."/>
            <person name="Okazaki Y."/>
            <person name="Orlando V."/>
            <person name="Pang K.C."/>
            <person name="Pavan W.J."/>
            <person name="Pavesi G."/>
            <person name="Pesole G."/>
            <person name="Petrovsky N."/>
            <person name="Piazza S."/>
            <person name="Reed J."/>
            <person name="Reid J.F."/>
            <person name="Ring B.Z."/>
            <person name="Ringwald M."/>
            <person name="Rost B."/>
            <person name="Ruan Y."/>
            <person name="Salzberg S.L."/>
            <person name="Sandelin A."/>
            <person name="Schneider C."/>
            <person name="Schoenbach C."/>
            <person name="Sekiguchi K."/>
            <person name="Semple C.A."/>
            <person name="Seno S."/>
            <person name="Sessa L."/>
            <person name="Sheng Y."/>
            <person name="Shibata Y."/>
            <person name="Shimada H."/>
            <person name="Shimada K."/>
            <person name="Silva D."/>
            <person name="Sinclair B."/>
            <person name="Sperling S."/>
            <person name="Stupka E."/>
            <person name="Sugiura K."/>
            <person name="Sultana R."/>
            <person name="Takenaka Y."/>
            <person name="Taki K."/>
            <person name="Tammoja K."/>
            <person name="Tan S.L."/>
            <person name="Tang S."/>
            <person name="Taylor M.S."/>
            <person name="Tegner J."/>
            <person name="Teichmann S.A."/>
            <person name="Ueda H.R."/>
            <person name="van Nimwegen E."/>
            <person name="Verardo R."/>
            <person name="Wei C.L."/>
            <person name="Yagi K."/>
            <person name="Yamanishi H."/>
            <person name="Zabarovsky E."/>
            <person name="Zhu S."/>
            <person name="Zimmer A."/>
            <person name="Hide W."/>
            <person name="Bult C."/>
            <person name="Grimmond S.M."/>
            <person name="Teasdale R.D."/>
            <person name="Liu E.T."/>
            <person name="Brusic V."/>
            <person name="Quackenbush J."/>
            <person name="Wahlestedt C."/>
            <person name="Mattick J.S."/>
            <person name="Hume D.A."/>
            <person name="Kai C."/>
            <person name="Sasaki D."/>
            <person name="Tomaru Y."/>
            <person name="Fukuda S."/>
            <person name="Kanamori-Katayama M."/>
            <person name="Suzuki M."/>
            <person name="Aoki J."/>
            <person name="Arakawa T."/>
            <person name="Iida J."/>
            <person name="Imamura K."/>
            <person name="Itoh M."/>
            <person name="Kato T."/>
            <person name="Kawaji H."/>
            <person name="Kawagashira N."/>
            <person name="Kawashima T."/>
            <person name="Kojima M."/>
            <person name="Kondo S."/>
            <person name="Konno H."/>
            <person name="Nakano K."/>
            <person name="Ninomiya N."/>
            <person name="Nishio T."/>
            <person name="Okada M."/>
            <person name="Plessy C."/>
            <person name="Shibata K."/>
            <person name="Shiraki T."/>
            <person name="Suzuki S."/>
            <person name="Tagami M."/>
            <person name="Waki K."/>
            <person name="Watahiki A."/>
            <person name="Okamura-Oho Y."/>
            <person name="Suzuki H."/>
            <person name="Kawai J."/>
            <person name="Hayashizaki Y."/>
        </authorList>
    </citation>
    <scope>NUCLEOTIDE SEQUENCE [LARGE SCALE MRNA]</scope>
    <source>
        <strain>C57BL/6J</strain>
    </source>
</reference>
<reference key="3">
    <citation type="journal article" date="2004" name="Genome Res.">
        <title>The status, quality, and expansion of the NIH full-length cDNA project: the Mammalian Gene Collection (MGC).</title>
        <authorList>
            <consortium name="The MGC Project Team"/>
        </authorList>
    </citation>
    <scope>NUCLEOTIDE SEQUENCE [LARGE SCALE MRNA]</scope>
</reference>
<reference key="4">
    <citation type="journal article" date="1991" name="Proc. Natl. Acad. Sci. U.S.A.">
        <title>Identification of 10 murine homeobox genes.</title>
        <authorList>
            <person name="Singh G."/>
            <person name="Kaur S."/>
            <person name="Stock J.L."/>
            <person name="Jenkins N.A."/>
            <person name="Gilbert D.J."/>
            <person name="Copeland N.G."/>
            <person name="Potter S.S."/>
        </authorList>
    </citation>
    <scope>NUCLEOTIDE SEQUENCE [GENOMIC DNA] OF 241-300</scope>
</reference>
<evidence type="ECO:0000255" key="1">
    <source>
        <dbReference type="PROSITE-ProRule" id="PRU00108"/>
    </source>
</evidence>
<evidence type="ECO:0000256" key="2">
    <source>
        <dbReference type="SAM" id="MobiDB-lite"/>
    </source>
</evidence>
<evidence type="ECO:0000305" key="3"/>
<sequence>MMDFDERGPCSSNMYLPSCTYYVSGPDFSSLPSFLPQTPSSRPMTYSYSSNLPQVQPVREVTFREYAIEPATKWHPRGNLAHCYSAEELVHRDCLQAPSAAGVPGDVLAKSSANVYHHPTPAVSSNFYSTVGRNGVLPQAFDQFFETAYGTPENLASSDYPGDKNAEKGPQAAAATSAAAVAAAATGAPATSSSDGGGGGGCQEAAAEEKERRRRPESSSSPESSSGHTEDKAGGSGGQRTRKKRCPYTKYQIRELEREFFFSVYINKEKRLQLSRMLNLTDRQVKIWFQNRRMKEKKINRDRLQYYSANPLL</sequence>
<feature type="chain" id="PRO_0000200096" description="Homeobox protein Hox-A11">
    <location>
        <begin position="1"/>
        <end position="313"/>
    </location>
</feature>
<feature type="DNA-binding region" description="Homeobox" evidence="1">
    <location>
        <begin position="241"/>
        <end position="300"/>
    </location>
</feature>
<feature type="region of interest" description="Disordered" evidence="2">
    <location>
        <begin position="188"/>
        <end position="246"/>
    </location>
</feature>
<feature type="compositionally biased region" description="Basic and acidic residues" evidence="2">
    <location>
        <begin position="207"/>
        <end position="217"/>
    </location>
</feature>
<protein>
    <recommendedName>
        <fullName>Homeobox protein Hox-A11</fullName>
    </recommendedName>
    <alternativeName>
        <fullName>Homeobox protein Hox-1.9</fullName>
    </alternativeName>
</protein>
<gene>
    <name type="primary">Hoxa11</name>
    <name type="synonym">Hox-1.9</name>
    <name type="synonym">Hoxa-11</name>
</gene>
<proteinExistence type="evidence at protein level"/>
<dbReference type="EMBL" id="U20371">
    <property type="protein sequence ID" value="AAA85711.1"/>
    <property type="molecule type" value="Genomic_DNA"/>
</dbReference>
<dbReference type="EMBL" id="U20370">
    <property type="protein sequence ID" value="AAA85710.1"/>
    <property type="molecule type" value="mRNA"/>
</dbReference>
<dbReference type="EMBL" id="AK133481">
    <property type="protein sequence ID" value="BAE21679.1"/>
    <property type="molecule type" value="mRNA"/>
</dbReference>
<dbReference type="EMBL" id="BC119302">
    <property type="protein sequence ID" value="AAI19303.1"/>
    <property type="molecule type" value="mRNA"/>
</dbReference>
<dbReference type="CCDS" id="CCDS20148.1"/>
<dbReference type="PIR" id="G37290">
    <property type="entry name" value="G37290"/>
</dbReference>
<dbReference type="RefSeq" id="NP_034580.1">
    <property type="nucleotide sequence ID" value="NM_010450.4"/>
</dbReference>
<dbReference type="SMR" id="P31311"/>
<dbReference type="BioGRID" id="200364">
    <property type="interactions" value="8"/>
</dbReference>
<dbReference type="FunCoup" id="P31311">
    <property type="interactions" value="342"/>
</dbReference>
<dbReference type="IntAct" id="P31311">
    <property type="interactions" value="7"/>
</dbReference>
<dbReference type="STRING" id="10090.ENSMUSP00000040920"/>
<dbReference type="iPTMnet" id="P31311"/>
<dbReference type="PhosphoSitePlus" id="P31311"/>
<dbReference type="PaxDb" id="10090-ENSMUSP00000040920"/>
<dbReference type="ProteomicsDB" id="273228"/>
<dbReference type="Antibodypedia" id="12408">
    <property type="antibodies" value="356 antibodies from 33 providers"/>
</dbReference>
<dbReference type="DNASU" id="15396"/>
<dbReference type="Ensembl" id="ENSMUST00000048026.10">
    <property type="protein sequence ID" value="ENSMUSP00000040920.9"/>
    <property type="gene ID" value="ENSMUSG00000038210.11"/>
</dbReference>
<dbReference type="GeneID" id="15396"/>
<dbReference type="KEGG" id="mmu:15396"/>
<dbReference type="UCSC" id="uc009byn.2">
    <property type="organism name" value="mouse"/>
</dbReference>
<dbReference type="AGR" id="MGI:96172"/>
<dbReference type="CTD" id="3207"/>
<dbReference type="MGI" id="MGI:96172">
    <property type="gene designation" value="Hoxa11"/>
</dbReference>
<dbReference type="VEuPathDB" id="HostDB:ENSMUSG00000038210"/>
<dbReference type="eggNOG" id="KOG0487">
    <property type="taxonomic scope" value="Eukaryota"/>
</dbReference>
<dbReference type="GeneTree" id="ENSGT00940000158311"/>
<dbReference type="HOGENOM" id="CLU_079662_0_0_1"/>
<dbReference type="InParanoid" id="P31311"/>
<dbReference type="OMA" id="HCYSADE"/>
<dbReference type="OrthoDB" id="6159439at2759"/>
<dbReference type="PhylomeDB" id="P31311"/>
<dbReference type="TreeFam" id="TF350668"/>
<dbReference type="BioGRID-ORCS" id="15396">
    <property type="hits" value="2 hits in 80 CRISPR screens"/>
</dbReference>
<dbReference type="ChiTaRS" id="Hoxa11">
    <property type="organism name" value="mouse"/>
</dbReference>
<dbReference type="PRO" id="PR:P31311"/>
<dbReference type="Proteomes" id="UP000000589">
    <property type="component" value="Chromosome 6"/>
</dbReference>
<dbReference type="RNAct" id="P31311">
    <property type="molecule type" value="protein"/>
</dbReference>
<dbReference type="Bgee" id="ENSMUSG00000038210">
    <property type="expression patterns" value="Expressed in gastrula and 83 other cell types or tissues"/>
</dbReference>
<dbReference type="GO" id="GO:0005654">
    <property type="term" value="C:nucleoplasm"/>
    <property type="evidence" value="ECO:0000304"/>
    <property type="project" value="Reactome"/>
</dbReference>
<dbReference type="GO" id="GO:0032991">
    <property type="term" value="C:protein-containing complex"/>
    <property type="evidence" value="ECO:0000314"/>
    <property type="project" value="UniProtKB"/>
</dbReference>
<dbReference type="GO" id="GO:0032993">
    <property type="term" value="C:protein-DNA complex"/>
    <property type="evidence" value="ECO:0000314"/>
    <property type="project" value="UniProtKB"/>
</dbReference>
<dbReference type="GO" id="GO:0005667">
    <property type="term" value="C:transcription regulator complex"/>
    <property type="evidence" value="ECO:0000314"/>
    <property type="project" value="MGI"/>
</dbReference>
<dbReference type="GO" id="GO:0003677">
    <property type="term" value="F:DNA binding"/>
    <property type="evidence" value="ECO:0000304"/>
    <property type="project" value="MGI"/>
</dbReference>
<dbReference type="GO" id="GO:0000981">
    <property type="term" value="F:DNA-binding transcription factor activity, RNA polymerase II-specific"/>
    <property type="evidence" value="ECO:0007669"/>
    <property type="project" value="InterPro"/>
</dbReference>
<dbReference type="GO" id="GO:1990837">
    <property type="term" value="F:sequence-specific double-stranded DNA binding"/>
    <property type="evidence" value="ECO:0007669"/>
    <property type="project" value="Ensembl"/>
</dbReference>
<dbReference type="GO" id="GO:0009952">
    <property type="term" value="P:anterior/posterior pattern specification"/>
    <property type="evidence" value="ECO:0000316"/>
    <property type="project" value="MGI"/>
</dbReference>
<dbReference type="GO" id="GO:0060348">
    <property type="term" value="P:bone development"/>
    <property type="evidence" value="ECO:0000315"/>
    <property type="project" value="MGI"/>
</dbReference>
<dbReference type="GO" id="GO:0001658">
    <property type="term" value="P:branching involved in ureteric bud morphogenesis"/>
    <property type="evidence" value="ECO:0000316"/>
    <property type="project" value="MGI"/>
</dbReference>
<dbReference type="GO" id="GO:0060351">
    <property type="term" value="P:cartilage development involved in endochondral bone morphogenesis"/>
    <property type="evidence" value="ECO:0000316"/>
    <property type="project" value="MGI"/>
</dbReference>
<dbReference type="GO" id="GO:0048468">
    <property type="term" value="P:cell development"/>
    <property type="evidence" value="ECO:0000316"/>
    <property type="project" value="MGI"/>
</dbReference>
<dbReference type="GO" id="GO:0002063">
    <property type="term" value="P:chondrocyte development"/>
    <property type="evidence" value="ECO:0000316"/>
    <property type="project" value="MGI"/>
</dbReference>
<dbReference type="GO" id="GO:0002062">
    <property type="term" value="P:chondrocyte differentiation"/>
    <property type="evidence" value="ECO:0000316"/>
    <property type="project" value="MGI"/>
</dbReference>
<dbReference type="GO" id="GO:0048589">
    <property type="term" value="P:developmental growth"/>
    <property type="evidence" value="ECO:0000316"/>
    <property type="project" value="MGI"/>
</dbReference>
<dbReference type="GO" id="GO:0009953">
    <property type="term" value="P:dorsal/ventral pattern formation"/>
    <property type="evidence" value="ECO:0000316"/>
    <property type="project" value="MGI"/>
</dbReference>
<dbReference type="GO" id="GO:0042733">
    <property type="term" value="P:embryonic digit morphogenesis"/>
    <property type="evidence" value="ECO:0000316"/>
    <property type="project" value="MGI"/>
</dbReference>
<dbReference type="GO" id="GO:0035115">
    <property type="term" value="P:embryonic forelimb morphogenesis"/>
    <property type="evidence" value="ECO:0000316"/>
    <property type="project" value="MGI"/>
</dbReference>
<dbReference type="GO" id="GO:0030326">
    <property type="term" value="P:embryonic limb morphogenesis"/>
    <property type="evidence" value="ECO:0000316"/>
    <property type="project" value="MGI"/>
</dbReference>
<dbReference type="GO" id="GO:0060272">
    <property type="term" value="P:embryonic skeletal joint morphogenesis"/>
    <property type="evidence" value="ECO:0000316"/>
    <property type="project" value="MGI"/>
</dbReference>
<dbReference type="GO" id="GO:0008584">
    <property type="term" value="P:male gonad development"/>
    <property type="evidence" value="ECO:0000315"/>
    <property type="project" value="MGI"/>
</dbReference>
<dbReference type="GO" id="GO:0007501">
    <property type="term" value="P:mesodermal cell fate specification"/>
    <property type="evidence" value="ECO:0000314"/>
    <property type="project" value="UniProtKB"/>
</dbReference>
<dbReference type="GO" id="GO:0001656">
    <property type="term" value="P:metanephros development"/>
    <property type="evidence" value="ECO:0000316"/>
    <property type="project" value="MGI"/>
</dbReference>
<dbReference type="GO" id="GO:0001759">
    <property type="term" value="P:organ induction"/>
    <property type="evidence" value="ECO:0000316"/>
    <property type="project" value="MGI"/>
</dbReference>
<dbReference type="GO" id="GO:1902761">
    <property type="term" value="P:positive regulation of chondrocyte development"/>
    <property type="evidence" value="ECO:0000316"/>
    <property type="project" value="MGI"/>
</dbReference>
<dbReference type="GO" id="GO:0032332">
    <property type="term" value="P:positive regulation of chondrocyte differentiation"/>
    <property type="evidence" value="ECO:0000316"/>
    <property type="project" value="MGI"/>
</dbReference>
<dbReference type="GO" id="GO:0045893">
    <property type="term" value="P:positive regulation of DNA-templated transcription"/>
    <property type="evidence" value="ECO:0000314"/>
    <property type="project" value="UniProtKB"/>
</dbReference>
<dbReference type="GO" id="GO:0030850">
    <property type="term" value="P:prostate gland development"/>
    <property type="evidence" value="ECO:0007669"/>
    <property type="project" value="Ensembl"/>
</dbReference>
<dbReference type="GO" id="GO:0009954">
    <property type="term" value="P:proximal/distal pattern formation"/>
    <property type="evidence" value="ECO:0000316"/>
    <property type="project" value="MGI"/>
</dbReference>
<dbReference type="GO" id="GO:0032330">
    <property type="term" value="P:regulation of chondrocyte differentiation"/>
    <property type="evidence" value="ECO:0000316"/>
    <property type="project" value="MGI"/>
</dbReference>
<dbReference type="GO" id="GO:0010468">
    <property type="term" value="P:regulation of gene expression"/>
    <property type="evidence" value="ECO:0000316"/>
    <property type="project" value="MGI"/>
</dbReference>
<dbReference type="GO" id="GO:0043627">
    <property type="term" value="P:response to estrogen"/>
    <property type="evidence" value="ECO:0007669"/>
    <property type="project" value="Ensembl"/>
</dbReference>
<dbReference type="GO" id="GO:0033574">
    <property type="term" value="P:response to testosterone"/>
    <property type="evidence" value="ECO:0007669"/>
    <property type="project" value="Ensembl"/>
</dbReference>
<dbReference type="GO" id="GO:0007338">
    <property type="term" value="P:single fertilization"/>
    <property type="evidence" value="ECO:0000315"/>
    <property type="project" value="MGI"/>
</dbReference>
<dbReference type="GO" id="GO:0001501">
    <property type="term" value="P:skeletal system development"/>
    <property type="evidence" value="ECO:0000315"/>
    <property type="project" value="MGI"/>
</dbReference>
<dbReference type="GO" id="GO:0007283">
    <property type="term" value="P:spermatogenesis"/>
    <property type="evidence" value="ECO:0000315"/>
    <property type="project" value="MGI"/>
</dbReference>
<dbReference type="GO" id="GO:0060065">
    <property type="term" value="P:uterus development"/>
    <property type="evidence" value="ECO:0000315"/>
    <property type="project" value="MGI"/>
</dbReference>
<dbReference type="CDD" id="cd00086">
    <property type="entry name" value="homeodomain"/>
    <property type="match status" value="1"/>
</dbReference>
<dbReference type="FunFam" id="1.10.10.60:FF:000166">
    <property type="entry name" value="homeobox protein Hox-C11"/>
    <property type="match status" value="1"/>
</dbReference>
<dbReference type="Gene3D" id="1.10.10.60">
    <property type="entry name" value="Homeodomain-like"/>
    <property type="match status" value="1"/>
</dbReference>
<dbReference type="InterPro" id="IPR021918">
    <property type="entry name" value="DUF3528"/>
</dbReference>
<dbReference type="InterPro" id="IPR001356">
    <property type="entry name" value="HD"/>
</dbReference>
<dbReference type="InterPro" id="IPR020479">
    <property type="entry name" value="HD_metazoa"/>
</dbReference>
<dbReference type="InterPro" id="IPR017970">
    <property type="entry name" value="Homeobox_CS"/>
</dbReference>
<dbReference type="InterPro" id="IPR009057">
    <property type="entry name" value="Homeodomain-like_sf"/>
</dbReference>
<dbReference type="PANTHER" id="PTHR46092:SF3">
    <property type="entry name" value="HOMEOBOX PROTEIN HOX-A11"/>
    <property type="match status" value="1"/>
</dbReference>
<dbReference type="PANTHER" id="PTHR46092">
    <property type="entry name" value="HOMEOBOX PROTEIN HOX-A11-RELATED"/>
    <property type="match status" value="1"/>
</dbReference>
<dbReference type="Pfam" id="PF12045">
    <property type="entry name" value="DUF3528"/>
    <property type="match status" value="1"/>
</dbReference>
<dbReference type="Pfam" id="PF00046">
    <property type="entry name" value="Homeodomain"/>
    <property type="match status" value="1"/>
</dbReference>
<dbReference type="PRINTS" id="PR00024">
    <property type="entry name" value="HOMEOBOX"/>
</dbReference>
<dbReference type="SMART" id="SM00389">
    <property type="entry name" value="HOX"/>
    <property type="match status" value="1"/>
</dbReference>
<dbReference type="SUPFAM" id="SSF46689">
    <property type="entry name" value="Homeodomain-like"/>
    <property type="match status" value="1"/>
</dbReference>
<dbReference type="PROSITE" id="PS00027">
    <property type="entry name" value="HOMEOBOX_1"/>
    <property type="match status" value="1"/>
</dbReference>
<dbReference type="PROSITE" id="PS50071">
    <property type="entry name" value="HOMEOBOX_2"/>
    <property type="match status" value="1"/>
</dbReference>
<organism>
    <name type="scientific">Mus musculus</name>
    <name type="common">Mouse</name>
    <dbReference type="NCBI Taxonomy" id="10090"/>
    <lineage>
        <taxon>Eukaryota</taxon>
        <taxon>Metazoa</taxon>
        <taxon>Chordata</taxon>
        <taxon>Craniata</taxon>
        <taxon>Vertebrata</taxon>
        <taxon>Euteleostomi</taxon>
        <taxon>Mammalia</taxon>
        <taxon>Eutheria</taxon>
        <taxon>Euarchontoglires</taxon>
        <taxon>Glires</taxon>
        <taxon>Rodentia</taxon>
        <taxon>Myomorpha</taxon>
        <taxon>Muroidea</taxon>
        <taxon>Muridae</taxon>
        <taxon>Murinae</taxon>
        <taxon>Mus</taxon>
        <taxon>Mus</taxon>
    </lineage>
</organism>
<comment type="function">
    <text>Sequence-specific transcription factor which is part of a developmental regulatory system that provides cells with specific positional identities on the anterior-posterior axis.</text>
</comment>
<comment type="interaction">
    <interactant intactId="EBI-445941">
        <id>P31311</id>
    </interactant>
    <interactant intactId="EBI-445922">
        <id>O88513</id>
        <label>Gmnn</label>
    </interactant>
    <organismsDiffer>false</organismsDiffer>
    <experiments>2</experiments>
</comment>
<comment type="subcellular location">
    <subcellularLocation>
        <location>Nucleus</location>
    </subcellularLocation>
</comment>
<comment type="similarity">
    <text evidence="3">Belongs to the Abd-B homeobox family.</text>
</comment>
<name>HXA11_MOUSE</name>